<accession>B0BSL4</accession>
<name>GLYA_ACTPJ</name>
<feature type="chain" id="PRO_1000091511" description="Serine hydroxymethyltransferase">
    <location>
        <begin position="1"/>
        <end position="421"/>
    </location>
</feature>
<feature type="binding site" evidence="1">
    <location>
        <position position="121"/>
    </location>
    <ligand>
        <name>(6S)-5,6,7,8-tetrahydrofolate</name>
        <dbReference type="ChEBI" id="CHEBI:57453"/>
    </ligand>
</feature>
<feature type="binding site" evidence="1">
    <location>
        <begin position="125"/>
        <end position="127"/>
    </location>
    <ligand>
        <name>(6S)-5,6,7,8-tetrahydrofolate</name>
        <dbReference type="ChEBI" id="CHEBI:57453"/>
    </ligand>
</feature>
<feature type="site" description="Plays an important role in substrate specificity" evidence="1">
    <location>
        <position position="228"/>
    </location>
</feature>
<feature type="modified residue" description="N6-(pyridoxal phosphate)lysine" evidence="1">
    <location>
        <position position="229"/>
    </location>
</feature>
<dbReference type="EC" id="2.1.2.1" evidence="1"/>
<dbReference type="EMBL" id="CP000687">
    <property type="protein sequence ID" value="ABY68816.1"/>
    <property type="molecule type" value="Genomic_DNA"/>
</dbReference>
<dbReference type="RefSeq" id="WP_005596003.1">
    <property type="nucleotide sequence ID" value="NC_010278.1"/>
</dbReference>
<dbReference type="SMR" id="B0BSL4"/>
<dbReference type="GeneID" id="48598356"/>
<dbReference type="KEGG" id="apj:APJL_0212"/>
<dbReference type="HOGENOM" id="CLU_022477_2_1_6"/>
<dbReference type="UniPathway" id="UPA00193"/>
<dbReference type="UniPathway" id="UPA00288">
    <property type="reaction ID" value="UER01023"/>
</dbReference>
<dbReference type="Proteomes" id="UP000008547">
    <property type="component" value="Chromosome"/>
</dbReference>
<dbReference type="GO" id="GO:0005829">
    <property type="term" value="C:cytosol"/>
    <property type="evidence" value="ECO:0007669"/>
    <property type="project" value="TreeGrafter"/>
</dbReference>
<dbReference type="GO" id="GO:0004372">
    <property type="term" value="F:glycine hydroxymethyltransferase activity"/>
    <property type="evidence" value="ECO:0007669"/>
    <property type="project" value="UniProtKB-UniRule"/>
</dbReference>
<dbReference type="GO" id="GO:0030170">
    <property type="term" value="F:pyridoxal phosphate binding"/>
    <property type="evidence" value="ECO:0007669"/>
    <property type="project" value="UniProtKB-UniRule"/>
</dbReference>
<dbReference type="GO" id="GO:0019264">
    <property type="term" value="P:glycine biosynthetic process from serine"/>
    <property type="evidence" value="ECO:0007669"/>
    <property type="project" value="UniProtKB-UniRule"/>
</dbReference>
<dbReference type="GO" id="GO:0035999">
    <property type="term" value="P:tetrahydrofolate interconversion"/>
    <property type="evidence" value="ECO:0007669"/>
    <property type="project" value="UniProtKB-UniRule"/>
</dbReference>
<dbReference type="CDD" id="cd00378">
    <property type="entry name" value="SHMT"/>
    <property type="match status" value="1"/>
</dbReference>
<dbReference type="FunFam" id="3.40.640.10:FF:000001">
    <property type="entry name" value="Serine hydroxymethyltransferase"/>
    <property type="match status" value="1"/>
</dbReference>
<dbReference type="FunFam" id="3.90.1150.10:FF:000003">
    <property type="entry name" value="Serine hydroxymethyltransferase"/>
    <property type="match status" value="1"/>
</dbReference>
<dbReference type="Gene3D" id="3.90.1150.10">
    <property type="entry name" value="Aspartate Aminotransferase, domain 1"/>
    <property type="match status" value="1"/>
</dbReference>
<dbReference type="Gene3D" id="3.40.640.10">
    <property type="entry name" value="Type I PLP-dependent aspartate aminotransferase-like (Major domain)"/>
    <property type="match status" value="1"/>
</dbReference>
<dbReference type="HAMAP" id="MF_00051">
    <property type="entry name" value="SHMT"/>
    <property type="match status" value="1"/>
</dbReference>
<dbReference type="InterPro" id="IPR015424">
    <property type="entry name" value="PyrdxlP-dep_Trfase"/>
</dbReference>
<dbReference type="InterPro" id="IPR015421">
    <property type="entry name" value="PyrdxlP-dep_Trfase_major"/>
</dbReference>
<dbReference type="InterPro" id="IPR015422">
    <property type="entry name" value="PyrdxlP-dep_Trfase_small"/>
</dbReference>
<dbReference type="InterPro" id="IPR001085">
    <property type="entry name" value="Ser_HO-MeTrfase"/>
</dbReference>
<dbReference type="InterPro" id="IPR049943">
    <property type="entry name" value="Ser_HO-MeTrfase-like"/>
</dbReference>
<dbReference type="InterPro" id="IPR019798">
    <property type="entry name" value="Ser_HO-MeTrfase_PLP_BS"/>
</dbReference>
<dbReference type="InterPro" id="IPR039429">
    <property type="entry name" value="SHMT-like_dom"/>
</dbReference>
<dbReference type="NCBIfam" id="NF000586">
    <property type="entry name" value="PRK00011.1"/>
    <property type="match status" value="1"/>
</dbReference>
<dbReference type="PANTHER" id="PTHR11680">
    <property type="entry name" value="SERINE HYDROXYMETHYLTRANSFERASE"/>
    <property type="match status" value="1"/>
</dbReference>
<dbReference type="PANTHER" id="PTHR11680:SF50">
    <property type="entry name" value="SERINE HYDROXYMETHYLTRANSFERASE"/>
    <property type="match status" value="1"/>
</dbReference>
<dbReference type="Pfam" id="PF00464">
    <property type="entry name" value="SHMT"/>
    <property type="match status" value="1"/>
</dbReference>
<dbReference type="PIRSF" id="PIRSF000412">
    <property type="entry name" value="SHMT"/>
    <property type="match status" value="1"/>
</dbReference>
<dbReference type="SUPFAM" id="SSF53383">
    <property type="entry name" value="PLP-dependent transferases"/>
    <property type="match status" value="1"/>
</dbReference>
<dbReference type="PROSITE" id="PS00096">
    <property type="entry name" value="SHMT"/>
    <property type="match status" value="1"/>
</dbReference>
<protein>
    <recommendedName>
        <fullName evidence="1">Serine hydroxymethyltransferase</fullName>
        <shortName evidence="1">SHMT</shortName>
        <shortName evidence="1">Serine methylase</shortName>
        <ecNumber evidence="1">2.1.2.1</ecNumber>
    </recommendedName>
</protein>
<organism>
    <name type="scientific">Actinobacillus pleuropneumoniae serotype 3 (strain JL03)</name>
    <dbReference type="NCBI Taxonomy" id="434271"/>
    <lineage>
        <taxon>Bacteria</taxon>
        <taxon>Pseudomonadati</taxon>
        <taxon>Pseudomonadota</taxon>
        <taxon>Gammaproteobacteria</taxon>
        <taxon>Pasteurellales</taxon>
        <taxon>Pasteurellaceae</taxon>
        <taxon>Actinobacillus</taxon>
    </lineage>
</organism>
<comment type="function">
    <text evidence="1">Catalyzes the reversible interconversion of serine and glycine with tetrahydrofolate (THF) serving as the one-carbon carrier. This reaction serves as the major source of one-carbon groups required for the biosynthesis of purines, thymidylate, methionine, and other important biomolecules. Also exhibits THF-independent aldolase activity toward beta-hydroxyamino acids, producing glycine and aldehydes, via a retro-aldol mechanism.</text>
</comment>
<comment type="catalytic activity">
    <reaction evidence="1">
        <text>(6R)-5,10-methylene-5,6,7,8-tetrahydrofolate + glycine + H2O = (6S)-5,6,7,8-tetrahydrofolate + L-serine</text>
        <dbReference type="Rhea" id="RHEA:15481"/>
        <dbReference type="ChEBI" id="CHEBI:15377"/>
        <dbReference type="ChEBI" id="CHEBI:15636"/>
        <dbReference type="ChEBI" id="CHEBI:33384"/>
        <dbReference type="ChEBI" id="CHEBI:57305"/>
        <dbReference type="ChEBI" id="CHEBI:57453"/>
        <dbReference type="EC" id="2.1.2.1"/>
    </reaction>
</comment>
<comment type="cofactor">
    <cofactor evidence="1">
        <name>pyridoxal 5'-phosphate</name>
        <dbReference type="ChEBI" id="CHEBI:597326"/>
    </cofactor>
</comment>
<comment type="pathway">
    <text evidence="1">One-carbon metabolism; tetrahydrofolate interconversion.</text>
</comment>
<comment type="pathway">
    <text evidence="1">Amino-acid biosynthesis; glycine biosynthesis; glycine from L-serine: step 1/1.</text>
</comment>
<comment type="subunit">
    <text evidence="1">Homodimer.</text>
</comment>
<comment type="subcellular location">
    <subcellularLocation>
        <location evidence="1">Cytoplasm</location>
    </subcellularLocation>
</comment>
<comment type="similarity">
    <text evidence="1">Belongs to the SHMT family.</text>
</comment>
<keyword id="KW-0028">Amino-acid biosynthesis</keyword>
<keyword id="KW-0963">Cytoplasm</keyword>
<keyword id="KW-0554">One-carbon metabolism</keyword>
<keyword id="KW-0663">Pyridoxal phosphate</keyword>
<keyword id="KW-0808">Transferase</keyword>
<gene>
    <name evidence="1" type="primary">glyA</name>
    <name type="ordered locus">APJL_0212</name>
</gene>
<evidence type="ECO:0000255" key="1">
    <source>
        <dbReference type="HAMAP-Rule" id="MF_00051"/>
    </source>
</evidence>
<proteinExistence type="inferred from homology"/>
<reference key="1">
    <citation type="journal article" date="2008" name="PLoS ONE">
        <title>Genome biology of Actinobacillus pleuropneumoniae JL03, an isolate of serotype 3 prevalent in China.</title>
        <authorList>
            <person name="Xu Z."/>
            <person name="Zhou Y."/>
            <person name="Li L."/>
            <person name="Zhou R."/>
            <person name="Xiao S."/>
            <person name="Wan Y."/>
            <person name="Zhang S."/>
            <person name="Wang K."/>
            <person name="Li W."/>
            <person name="Li L."/>
            <person name="Jin H."/>
            <person name="Kang M."/>
            <person name="Dalai B."/>
            <person name="Li T."/>
            <person name="Liu L."/>
            <person name="Cheng Y."/>
            <person name="Zhang L."/>
            <person name="Xu T."/>
            <person name="Zheng H."/>
            <person name="Pu S."/>
            <person name="Wang B."/>
            <person name="Gu W."/>
            <person name="Zhang X.L."/>
            <person name="Zhu G.-F."/>
            <person name="Wang S."/>
            <person name="Zhao G.-P."/>
            <person name="Chen H."/>
        </authorList>
    </citation>
    <scope>NUCLEOTIDE SEQUENCE [LARGE SCALE GENOMIC DNA]</scope>
    <source>
        <strain>JL03</strain>
    </source>
</reference>
<sequence>MFTANMNIQDYDPILWQAIENENRRQEEHIELIASENYASPRVMQAQGSQFTNKYAEGYPGKRYYGGCEYADIVEQLAIDRAKQLFGADYVNVQPHSGSQANAAVYGALIQPNDTILGMDLAHGGHLTHGAKVSFSGKIYNSVLYGITAEGLIDYEDVRQKALECKPKMIVAGFSAYSQIVDWAKMREIADEVGAYLFVDMAHVAGLIAAGVYPSPLPYAHVVTTTTHKTLGGPRGGLILSACGDEEIYKKLQSSVFPANQGGPLVHIIAAKAVCFKEALEPEYKIYQQNVVKNAKAMVEVFKQRGYEVISNGTENHLFLVSFVKQGLTGKAADAALGQANITVNKNSVPNDPQKPFITSGIRIGTPAVTRRGFKEADVQALAGWMCDVLDSIGKDNHEQVIAETKAKVLDICARLPVYAK</sequence>